<reference key="1">
    <citation type="submission" date="2019-10" db="EMBL/GenBank/DDBJ databases">
        <title>Aspergillus terreus TN-484 whole genome shotgun sequence.</title>
        <authorList>
            <person name="Kanamasa S."/>
            <person name="Takahashi H."/>
        </authorList>
    </citation>
    <scope>NUCLEOTIDE SEQUENCE [LARGE SCALE GENOMIC DNA]</scope>
    <source>
        <strain>TN-484</strain>
    </source>
</reference>
<reference key="2">
    <citation type="journal article" date="2017" name="Microorganisms">
        <title>Melanisation of Aspergillus terreus-is butyrolactone I involved in the regulation of both DOPA and DHN types of pigments in submerged culture?</title>
        <authorList>
            <person name="Palonen E.K."/>
            <person name="Raina S."/>
            <person name="Brandt A."/>
            <person name="Meriluoto J."/>
            <person name="Keshavarz T."/>
            <person name="Soini J.T."/>
        </authorList>
    </citation>
    <scope>IDENTIFICATION</scope>
    <scope>FUNCTION</scope>
    <scope>INDUCTION</scope>
    <source>
        <strain>MUCL38669</strain>
    </source>
</reference>
<reference key="3">
    <citation type="journal article" date="2022" name="Fungal Genet. Biol.">
        <title>Identification of a polyketide biosynthesis gene cluster by transcriptional regulator activation in Aspergillus terreus.</title>
        <authorList>
            <person name="Tang S."/>
            <person name="Men P."/>
            <person name="Zhang W."/>
            <person name="Li H."/>
            <person name="Li Z."/>
            <person name="Huang X."/>
            <person name="Lu X."/>
        </authorList>
    </citation>
    <scope>FUNCTION</scope>
    <scope>INDUCTION</scope>
    <scope>DISRUPTION PHENOTYPE</scope>
    <scope>PATHWAY</scope>
</reference>
<accession>A0A5M3Z5R2</accession>
<gene>
    <name evidence="5" type="primary">pgmH</name>
    <name type="ORF">ATETN484_0009059200</name>
</gene>
<protein>
    <recommendedName>
        <fullName evidence="5">FAD-linked oxidoreductase pgmH</fullName>
        <ecNumber evidence="7">1.1.1.-</ecNumber>
    </recommendedName>
    <alternativeName>
        <fullName evidence="5">Pigmented naphthoquinones biosynthesis cluster protein H</fullName>
    </alternativeName>
</protein>
<organism>
    <name type="scientific">Aspergillus terreus</name>
    <dbReference type="NCBI Taxonomy" id="33178"/>
    <lineage>
        <taxon>Eukaryota</taxon>
        <taxon>Fungi</taxon>
        <taxon>Dikarya</taxon>
        <taxon>Ascomycota</taxon>
        <taxon>Pezizomycotina</taxon>
        <taxon>Eurotiomycetes</taxon>
        <taxon>Eurotiomycetidae</taxon>
        <taxon>Eurotiales</taxon>
        <taxon>Aspergillaceae</taxon>
        <taxon>Aspergillus</taxon>
        <taxon>Aspergillus subgen. Circumdati</taxon>
    </lineage>
</organism>
<evidence type="ECO:0000250" key="1">
    <source>
        <dbReference type="UniProtKB" id="Q5BEJ5"/>
    </source>
</evidence>
<evidence type="ECO:0000255" key="2">
    <source>
        <dbReference type="PROSITE-ProRule" id="PRU00718"/>
    </source>
</evidence>
<evidence type="ECO:0000269" key="3">
    <source>
    </source>
</evidence>
<evidence type="ECO:0000269" key="4">
    <source>
    </source>
</evidence>
<evidence type="ECO:0000303" key="5">
    <source>
    </source>
</evidence>
<evidence type="ECO:0000305" key="6"/>
<evidence type="ECO:0000305" key="7">
    <source>
    </source>
</evidence>
<sequence length="492" mass="54399">MDPNILWQARNDGSALQEEDIQQLRSSIRGTVVLKNEASEEEYNAAVTRWNNVSIRLATLVVYVEDEQDIVKCVEFVNKHYLDVAVCSHGRHSYHGASSSTGMVIDLGRMRRVSVDKEAMTVTAQGGCIARDVELPLEAEGLATVFGAVNETGIGGLTLGGGVGFLTGAHGLAADNLVSARMVLANGQVVTASDDENSDLFWAIRGAGPNFGIVTEFKYRVHKQGPVFWQMLFYSPDKLKDCVSIVNQMHNISLAQKGGDFQVMMAYLTPPGYPDLHPGLRIFYNGPEEKAKELAAPAYALGPLSVSGGMCNFSDTTRIPPYLEFEGFDRYAASSAHLDYPLDENLLLEVFTMFRNVIHKYGHHLLHPSKCILDLRNYEKVASVPIDATAYSGRFDVAWMIPDLQWDDPAMDSTMRMEVTSITAHIRERVREAKGGHVNGPRDATAIYPNISAGGEEKAKSVFGPNLPRLQVLKRKYDPDFIWNKWFPIVPA</sequence>
<comment type="function">
    <text evidence="3 4 7">FAD-linked oxidoreductase; part of the gene cluster that mediates the biosynthesis of pleosporalin A, ascomycone A, as well as a third cryptic naphthoquinone derived pigment, all responsible for the coloration of conidia (PubMed:28471414, PubMed:35351612). Essential for the production of pleosporalin A, but not the 2 other final products (PubMed:35351612). The pathway begins with the biosynthesis of the cyclized heptaketide 3-acetonyl-1,6,8-trihydroxy-2-naphthaldehyde by the NR-PKS pgmA. The C-6 hydroxyl group is further methylated by the O-methyltransferase pgmB to yield fusarubinaldehyde which is in turn oxidized by the cytochrome P450 monooxygenase pgmC at C-9. The C-1 hydroxyl group is then methylated spontaneously. Although pgmE, pgmD and pgmH are essential for the production of pleosporalin A, it is not the case for the 2 other final products and it remains difficult to assign a specific function to each enzyme. PgmF and pgmG seem not to be involved in pigment biosynthesis although they were regulated by the cluster-specific transcription factor pgmR (Probable) (PubMed:35351612).</text>
</comment>
<comment type="cofactor">
    <cofactor evidence="1">
        <name>FAD</name>
        <dbReference type="ChEBI" id="CHEBI:57692"/>
    </cofactor>
</comment>
<comment type="pathway">
    <text evidence="4">Pigment biosynthesis.</text>
</comment>
<comment type="pathway">
    <text evidence="4">Secondary metabolite biosynthesis.</text>
</comment>
<comment type="induction">
    <text evidence="3 4">Expression is significantly up-regulated at the end of late growth phase, in the presence of Butyrolactone I (PubMed:28471414). Expression is positively regulated by the pgm cluster-specific transcription factor pgmR (PubMed:35351612).</text>
</comment>
<comment type="disruption phenotype">
    <text evidence="4">Only abolishes the production of pleosporalin A but not of the 2 other final products.</text>
</comment>
<comment type="similarity">
    <text evidence="6">Belongs to the oxygen-dependent FAD-linked oxidoreductase family.</text>
</comment>
<dbReference type="EC" id="1.1.1.-" evidence="7"/>
<dbReference type="EMBL" id="BKZM02000009">
    <property type="protein sequence ID" value="GES63905.1"/>
    <property type="molecule type" value="Genomic_DNA"/>
</dbReference>
<dbReference type="SMR" id="A0A5M3Z5R2"/>
<dbReference type="VEuPathDB" id="FungiDB:ATEG_06211"/>
<dbReference type="OrthoDB" id="415825at2759"/>
<dbReference type="GO" id="GO:0071949">
    <property type="term" value="F:FAD binding"/>
    <property type="evidence" value="ECO:0007669"/>
    <property type="project" value="InterPro"/>
</dbReference>
<dbReference type="GO" id="GO:0016491">
    <property type="term" value="F:oxidoreductase activity"/>
    <property type="evidence" value="ECO:0007669"/>
    <property type="project" value="UniProtKB-KW"/>
</dbReference>
<dbReference type="Gene3D" id="3.30.465.10">
    <property type="match status" value="1"/>
</dbReference>
<dbReference type="Gene3D" id="3.40.462.20">
    <property type="match status" value="1"/>
</dbReference>
<dbReference type="Gene3D" id="3.30.43.10">
    <property type="entry name" value="Uridine Diphospho-n-acetylenolpyruvylglucosamine Reductase, domain 2"/>
    <property type="match status" value="1"/>
</dbReference>
<dbReference type="InterPro" id="IPR016166">
    <property type="entry name" value="FAD-bd_PCMH"/>
</dbReference>
<dbReference type="InterPro" id="IPR036318">
    <property type="entry name" value="FAD-bd_PCMH-like_sf"/>
</dbReference>
<dbReference type="InterPro" id="IPR016167">
    <property type="entry name" value="FAD-bd_PCMH_sub1"/>
</dbReference>
<dbReference type="InterPro" id="IPR016169">
    <property type="entry name" value="FAD-bd_PCMH_sub2"/>
</dbReference>
<dbReference type="InterPro" id="IPR050416">
    <property type="entry name" value="FAD-linked_Oxidoreductase"/>
</dbReference>
<dbReference type="InterPro" id="IPR006094">
    <property type="entry name" value="Oxid_FAD_bind_N"/>
</dbReference>
<dbReference type="PANTHER" id="PTHR42973">
    <property type="entry name" value="BINDING OXIDOREDUCTASE, PUTATIVE (AFU_ORTHOLOGUE AFUA_1G17690)-RELATED"/>
    <property type="match status" value="1"/>
</dbReference>
<dbReference type="PANTHER" id="PTHR42973:SF39">
    <property type="entry name" value="FAD-BINDING PCMH-TYPE DOMAIN-CONTAINING PROTEIN"/>
    <property type="match status" value="1"/>
</dbReference>
<dbReference type="Pfam" id="PF01565">
    <property type="entry name" value="FAD_binding_4"/>
    <property type="match status" value="1"/>
</dbReference>
<dbReference type="SUPFAM" id="SSF56176">
    <property type="entry name" value="FAD-binding/transporter-associated domain-like"/>
    <property type="match status" value="1"/>
</dbReference>
<dbReference type="PROSITE" id="PS51387">
    <property type="entry name" value="FAD_PCMH"/>
    <property type="match status" value="1"/>
</dbReference>
<feature type="chain" id="PRO_0000456015" description="FAD-linked oxidoreductase pgmH">
    <location>
        <begin position="1"/>
        <end position="492"/>
    </location>
</feature>
<feature type="domain" description="FAD-binding PCMH-type" evidence="2">
    <location>
        <begin position="54"/>
        <end position="224"/>
    </location>
</feature>
<name>PGMH_ASPTE</name>
<proteinExistence type="evidence at transcript level"/>
<keyword id="KW-0274">FAD</keyword>
<keyword id="KW-0285">Flavoprotein</keyword>
<keyword id="KW-0560">Oxidoreductase</keyword>